<organism>
    <name type="scientific">Stutzerimonas stutzeri (strain A1501)</name>
    <name type="common">Pseudomonas stutzeri</name>
    <dbReference type="NCBI Taxonomy" id="379731"/>
    <lineage>
        <taxon>Bacteria</taxon>
        <taxon>Pseudomonadati</taxon>
        <taxon>Pseudomonadota</taxon>
        <taxon>Gammaproteobacteria</taxon>
        <taxon>Pseudomonadales</taxon>
        <taxon>Pseudomonadaceae</taxon>
        <taxon>Stutzerimonas</taxon>
    </lineage>
</organism>
<reference key="1">
    <citation type="journal article" date="2008" name="Proc. Natl. Acad. Sci. U.S.A.">
        <title>Nitrogen fixation island and rhizosphere competence traits in the genome of root-associated Pseudomonas stutzeri A1501.</title>
        <authorList>
            <person name="Yan Y."/>
            <person name="Yang J."/>
            <person name="Dou Y."/>
            <person name="Chen M."/>
            <person name="Ping S."/>
            <person name="Peng J."/>
            <person name="Lu W."/>
            <person name="Zhang W."/>
            <person name="Yao Z."/>
            <person name="Li H."/>
            <person name="Liu W."/>
            <person name="He S."/>
            <person name="Geng L."/>
            <person name="Zhang X."/>
            <person name="Yang F."/>
            <person name="Yu H."/>
            <person name="Zhan Y."/>
            <person name="Li D."/>
            <person name="Lin Z."/>
            <person name="Wang Y."/>
            <person name="Elmerich C."/>
            <person name="Lin M."/>
            <person name="Jin Q."/>
        </authorList>
    </citation>
    <scope>NUCLEOTIDE SEQUENCE [LARGE SCALE GENOMIC DNA]</scope>
    <source>
        <strain>A1501</strain>
    </source>
</reference>
<accession>A4VKH1</accession>
<sequence length="85" mass="9473">MKPGIHPDYRPVLFHDTAADVYFLIGSTAETTRTHQHTDGNTYPYIALDVSSASHPIYTGKQRKTTTEGRIAGFNKRFAGFATKK</sequence>
<evidence type="ECO:0000255" key="1">
    <source>
        <dbReference type="HAMAP-Rule" id="MF_00502"/>
    </source>
</evidence>
<evidence type="ECO:0000305" key="2"/>
<protein>
    <recommendedName>
        <fullName evidence="1">Large ribosomal subunit protein bL31B</fullName>
    </recommendedName>
    <alternativeName>
        <fullName evidence="2">50S ribosomal protein L31 type B</fullName>
    </alternativeName>
</protein>
<comment type="subunit">
    <text evidence="1">Part of the 50S ribosomal subunit.</text>
</comment>
<comment type="similarity">
    <text evidence="1">Belongs to the bacterial ribosomal protein bL31 family. Type B subfamily.</text>
</comment>
<name>RL31B_STUS1</name>
<feature type="chain" id="PRO_1000014713" description="Large ribosomal subunit protein bL31B">
    <location>
        <begin position="1"/>
        <end position="85"/>
    </location>
</feature>
<gene>
    <name evidence="1" type="primary">rpmE2</name>
    <name type="ordered locus">PST_1798</name>
</gene>
<keyword id="KW-1185">Reference proteome</keyword>
<keyword id="KW-0687">Ribonucleoprotein</keyword>
<keyword id="KW-0689">Ribosomal protein</keyword>
<dbReference type="EMBL" id="CP000304">
    <property type="protein sequence ID" value="ABP79472.1"/>
    <property type="molecule type" value="Genomic_DNA"/>
</dbReference>
<dbReference type="RefSeq" id="WP_011912949.1">
    <property type="nucleotide sequence ID" value="NC_009434.1"/>
</dbReference>
<dbReference type="SMR" id="A4VKH1"/>
<dbReference type="KEGG" id="psa:PST_1798"/>
<dbReference type="eggNOG" id="COG0254">
    <property type="taxonomic scope" value="Bacteria"/>
</dbReference>
<dbReference type="HOGENOM" id="CLU_114306_2_2_6"/>
<dbReference type="Proteomes" id="UP000000233">
    <property type="component" value="Chromosome"/>
</dbReference>
<dbReference type="GO" id="GO:1990904">
    <property type="term" value="C:ribonucleoprotein complex"/>
    <property type="evidence" value="ECO:0007669"/>
    <property type="project" value="UniProtKB-KW"/>
</dbReference>
<dbReference type="GO" id="GO:0005840">
    <property type="term" value="C:ribosome"/>
    <property type="evidence" value="ECO:0007669"/>
    <property type="project" value="UniProtKB-KW"/>
</dbReference>
<dbReference type="GO" id="GO:0003735">
    <property type="term" value="F:structural constituent of ribosome"/>
    <property type="evidence" value="ECO:0007669"/>
    <property type="project" value="InterPro"/>
</dbReference>
<dbReference type="GO" id="GO:0006412">
    <property type="term" value="P:translation"/>
    <property type="evidence" value="ECO:0007669"/>
    <property type="project" value="UniProtKB-UniRule"/>
</dbReference>
<dbReference type="Gene3D" id="4.10.830.30">
    <property type="entry name" value="Ribosomal protein L31"/>
    <property type="match status" value="1"/>
</dbReference>
<dbReference type="HAMAP" id="MF_00502">
    <property type="entry name" value="Ribosomal_bL31_2"/>
    <property type="match status" value="1"/>
</dbReference>
<dbReference type="InterPro" id="IPR034704">
    <property type="entry name" value="Ribosomal_bL28/bL31-like_sf"/>
</dbReference>
<dbReference type="InterPro" id="IPR002150">
    <property type="entry name" value="Ribosomal_bL31"/>
</dbReference>
<dbReference type="InterPro" id="IPR027493">
    <property type="entry name" value="Ribosomal_bL31_B"/>
</dbReference>
<dbReference type="InterPro" id="IPR042105">
    <property type="entry name" value="Ribosomal_bL31_sf"/>
</dbReference>
<dbReference type="NCBIfam" id="TIGR00105">
    <property type="entry name" value="L31"/>
    <property type="match status" value="1"/>
</dbReference>
<dbReference type="NCBIfam" id="NF002462">
    <property type="entry name" value="PRK01678.1"/>
    <property type="match status" value="1"/>
</dbReference>
<dbReference type="PANTHER" id="PTHR33280">
    <property type="entry name" value="50S RIBOSOMAL PROTEIN L31, CHLOROPLASTIC"/>
    <property type="match status" value="1"/>
</dbReference>
<dbReference type="PANTHER" id="PTHR33280:SF1">
    <property type="entry name" value="LARGE RIBOSOMAL SUBUNIT PROTEIN BL31C"/>
    <property type="match status" value="1"/>
</dbReference>
<dbReference type="Pfam" id="PF01197">
    <property type="entry name" value="Ribosomal_L31"/>
    <property type="match status" value="1"/>
</dbReference>
<dbReference type="PRINTS" id="PR01249">
    <property type="entry name" value="RIBOSOMALL31"/>
</dbReference>
<dbReference type="SUPFAM" id="SSF143800">
    <property type="entry name" value="L28p-like"/>
    <property type="match status" value="1"/>
</dbReference>
<proteinExistence type="inferred from homology"/>